<evidence type="ECO:0000250" key="1">
    <source>
        <dbReference type="UniProtKB" id="P00950"/>
    </source>
</evidence>
<evidence type="ECO:0000256" key="2">
    <source>
        <dbReference type="SAM" id="MobiDB-lite"/>
    </source>
</evidence>
<evidence type="ECO:0000269" key="3">
    <source>
    </source>
</evidence>
<evidence type="ECO:0000305" key="4"/>
<feature type="chain" id="PRO_0000179841" description="Phosphoglycerate mutase 3">
    <location>
        <begin position="1"/>
        <end position="303"/>
    </location>
</feature>
<feature type="region of interest" description="Disordered" evidence="2">
    <location>
        <begin position="168"/>
        <end position="198"/>
    </location>
</feature>
<feature type="compositionally biased region" description="Basic and acidic residues" evidence="2">
    <location>
        <begin position="177"/>
        <end position="198"/>
    </location>
</feature>
<feature type="active site" description="Tele-phosphohistidine intermediate" evidence="1">
    <location>
        <position position="14"/>
    </location>
</feature>
<feature type="active site" description="Proton donor/acceptor" evidence="1">
    <location>
        <position position="120"/>
    </location>
</feature>
<feature type="binding site" evidence="1">
    <location>
        <begin position="13"/>
        <end position="20"/>
    </location>
    <ligand>
        <name>substrate</name>
    </ligand>
</feature>
<feature type="binding site" evidence="1">
    <location>
        <begin position="26"/>
        <end position="27"/>
    </location>
    <ligand>
        <name>substrate</name>
    </ligand>
</feature>
<feature type="binding site" evidence="1">
    <location>
        <position position="70"/>
    </location>
    <ligand>
        <name>substrate</name>
    </ligand>
</feature>
<feature type="binding site" evidence="1">
    <location>
        <begin position="120"/>
        <end position="123"/>
    </location>
    <ligand>
        <name>substrate</name>
    </ligand>
</feature>
<feature type="binding site" evidence="1">
    <location>
        <position position="131"/>
    </location>
    <ligand>
        <name>substrate</name>
    </ligand>
</feature>
<feature type="binding site" evidence="1">
    <location>
        <begin position="147"/>
        <end position="148"/>
    </location>
    <ligand>
        <name>substrate</name>
    </ligand>
</feature>
<feature type="binding site" evidence="1">
    <location>
        <begin position="236"/>
        <end position="237"/>
    </location>
    <ligand>
        <name>substrate</name>
    </ligand>
</feature>
<feature type="site" description="Transition state stabilizer" evidence="1">
    <location>
        <position position="235"/>
    </location>
</feature>
<name>PMG3_YEAST</name>
<sequence>MTVTDTFKLFILRHGQSELNSENIFCGWIDAQLTEKGKSQARHSAKLIKQFCDSNNISLPQIGYTSRLIRTQQTMDVILEELGLKHTNYVITTNTNIKEELQDTRFEGSMPVLQTWRLNERHYGAWQGQRKPDILKEYGKEKYMYIRRDYNGKPPKVNLNLEMVQEENDQGSSTGYDFKEPNRHLKYGPEEKANERLPESESLCEVVVRLKPFLNNVVLSTANKISQESCVIVGHGSSVRSLLKVLEGISDEDIKDVDIPNGIPLVIELDRDNYSFVRKFYLDPESAKVNAQMVRDEGFEKNP</sequence>
<gene>
    <name type="primary">GPM3</name>
    <name type="ordered locus">YOL056W</name>
    <name type="ORF">O1236</name>
</gene>
<protein>
    <recommendedName>
        <fullName>Phosphoglycerate mutase 3</fullName>
        <shortName>PGAM 3</shortName>
        <ecNumber>5.4.2.11</ecNumber>
    </recommendedName>
    <alternativeName>
        <fullName>BPG-dependent PGAM 3</fullName>
    </alternativeName>
    <alternativeName>
        <fullName>MPGM 3</fullName>
    </alternativeName>
    <alternativeName>
        <fullName>Phosphoglyceromutase 3</fullName>
    </alternativeName>
</protein>
<keyword id="KW-0324">Glycolysis</keyword>
<keyword id="KW-0413">Isomerase</keyword>
<keyword id="KW-1185">Reference proteome</keyword>
<proteinExistence type="evidence at protein level"/>
<comment type="function">
    <text>Could be non-functional.</text>
</comment>
<comment type="catalytic activity">
    <reaction>
        <text>(2R)-2-phosphoglycerate = (2R)-3-phosphoglycerate</text>
        <dbReference type="Rhea" id="RHEA:15901"/>
        <dbReference type="ChEBI" id="CHEBI:58272"/>
        <dbReference type="ChEBI" id="CHEBI:58289"/>
        <dbReference type="EC" id="5.4.2.11"/>
    </reaction>
</comment>
<comment type="pathway">
    <text>Carbohydrate degradation; glycolysis; pyruvate from D-glyceraldehyde 3-phosphate: step 3/5.</text>
</comment>
<comment type="miscellaneous">
    <text evidence="3">Present with 3730 molecules/cell in log phase SD medium.</text>
</comment>
<comment type="similarity">
    <text evidence="4">Belongs to the phosphoglycerate mutase family. BPG-dependent PGAM subfamily.</text>
</comment>
<reference key="1">
    <citation type="journal article" date="1996" name="Yeast">
        <title>Analysis of a 26 kb region on the left arm of yeast chromosome XV.</title>
        <authorList>
            <person name="Mannhaupt G."/>
            <person name="Vetter I."/>
            <person name="Schwarzlose C."/>
            <person name="Mitzel S."/>
            <person name="Feldmann H."/>
        </authorList>
    </citation>
    <scope>NUCLEOTIDE SEQUENCE [GENOMIC DNA]</scope>
    <source>
        <strain>ATCC 90843 / S288c / FY73</strain>
    </source>
</reference>
<reference key="2">
    <citation type="journal article" date="1997" name="Nature">
        <title>The nucleotide sequence of Saccharomyces cerevisiae chromosome XV.</title>
        <authorList>
            <person name="Dujon B."/>
            <person name="Albermann K."/>
            <person name="Aldea M."/>
            <person name="Alexandraki D."/>
            <person name="Ansorge W."/>
            <person name="Arino J."/>
            <person name="Benes V."/>
            <person name="Bohn C."/>
            <person name="Bolotin-Fukuhara M."/>
            <person name="Bordonne R."/>
            <person name="Boyer J."/>
            <person name="Camasses A."/>
            <person name="Casamayor A."/>
            <person name="Casas C."/>
            <person name="Cheret G."/>
            <person name="Cziepluch C."/>
            <person name="Daignan-Fornier B."/>
            <person name="Dang V.-D."/>
            <person name="de Haan M."/>
            <person name="Delius H."/>
            <person name="Durand P."/>
            <person name="Fairhead C."/>
            <person name="Feldmann H."/>
            <person name="Gaillon L."/>
            <person name="Galisson F."/>
            <person name="Gamo F.-J."/>
            <person name="Gancedo C."/>
            <person name="Goffeau A."/>
            <person name="Goulding S.E."/>
            <person name="Grivell L.A."/>
            <person name="Habbig B."/>
            <person name="Hand N.J."/>
            <person name="Hani J."/>
            <person name="Hattenhorst U."/>
            <person name="Hebling U."/>
            <person name="Hernando Y."/>
            <person name="Herrero E."/>
            <person name="Heumann K."/>
            <person name="Hiesel R."/>
            <person name="Hilger F."/>
            <person name="Hofmann B."/>
            <person name="Hollenberg C.P."/>
            <person name="Hughes B."/>
            <person name="Jauniaux J.-C."/>
            <person name="Kalogeropoulos A."/>
            <person name="Katsoulou C."/>
            <person name="Kordes E."/>
            <person name="Lafuente M.J."/>
            <person name="Landt O."/>
            <person name="Louis E.J."/>
            <person name="Maarse A.C."/>
            <person name="Madania A."/>
            <person name="Mannhaupt G."/>
            <person name="Marck C."/>
            <person name="Martin R.P."/>
            <person name="Mewes H.-W."/>
            <person name="Michaux G."/>
            <person name="Paces V."/>
            <person name="Parle-McDermott A.G."/>
            <person name="Pearson B.M."/>
            <person name="Perrin A."/>
            <person name="Pettersson B."/>
            <person name="Poch O."/>
            <person name="Pohl T.M."/>
            <person name="Poirey R."/>
            <person name="Portetelle D."/>
            <person name="Pujol A."/>
            <person name="Purnelle B."/>
            <person name="Ramezani Rad M."/>
            <person name="Rechmann S."/>
            <person name="Schwager C."/>
            <person name="Schweizer M."/>
            <person name="Sor F."/>
            <person name="Sterky F."/>
            <person name="Tarassov I.A."/>
            <person name="Teodoru C."/>
            <person name="Tettelin H."/>
            <person name="Thierry A."/>
            <person name="Tobiasch E."/>
            <person name="Tzermia M."/>
            <person name="Uhlen M."/>
            <person name="Unseld M."/>
            <person name="Valens M."/>
            <person name="Vandenbol M."/>
            <person name="Vetter I."/>
            <person name="Vlcek C."/>
            <person name="Voet M."/>
            <person name="Volckaert G."/>
            <person name="Voss H."/>
            <person name="Wambutt R."/>
            <person name="Wedler H."/>
            <person name="Wiemann S."/>
            <person name="Winsor B."/>
            <person name="Wolfe K.H."/>
            <person name="Zollner A."/>
            <person name="Zumstein E."/>
            <person name="Kleine K."/>
        </authorList>
    </citation>
    <scope>NUCLEOTIDE SEQUENCE [LARGE SCALE GENOMIC DNA]</scope>
    <source>
        <strain>ATCC 204508 / S288c</strain>
    </source>
</reference>
<reference key="3">
    <citation type="journal article" date="2014" name="G3 (Bethesda)">
        <title>The reference genome sequence of Saccharomyces cerevisiae: Then and now.</title>
        <authorList>
            <person name="Engel S.R."/>
            <person name="Dietrich F.S."/>
            <person name="Fisk D.G."/>
            <person name="Binkley G."/>
            <person name="Balakrishnan R."/>
            <person name="Costanzo M.C."/>
            <person name="Dwight S.S."/>
            <person name="Hitz B.C."/>
            <person name="Karra K."/>
            <person name="Nash R.S."/>
            <person name="Weng S."/>
            <person name="Wong E.D."/>
            <person name="Lloyd P."/>
            <person name="Skrzypek M.S."/>
            <person name="Miyasato S.R."/>
            <person name="Simison M."/>
            <person name="Cherry J.M."/>
        </authorList>
    </citation>
    <scope>GENOME REANNOTATION</scope>
    <source>
        <strain>ATCC 204508 / S288c</strain>
    </source>
</reference>
<reference key="4">
    <citation type="journal article" date="1998" name="Yeast">
        <title>Investigation of two yeast genes encoding putative isoenzymes of phosphoglycerate mutase.</title>
        <authorList>
            <person name="Heinisch J.J."/>
            <person name="Mueller S."/>
            <person name="Schlueter E."/>
            <person name="Jacoby J."/>
            <person name="Rodicio R."/>
        </authorList>
    </citation>
    <scope>CHARACTERIZATION</scope>
</reference>
<reference key="5">
    <citation type="journal article" date="2003" name="Nature">
        <title>Global analysis of protein expression in yeast.</title>
        <authorList>
            <person name="Ghaemmaghami S."/>
            <person name="Huh W.-K."/>
            <person name="Bower K."/>
            <person name="Howson R.W."/>
            <person name="Belle A."/>
            <person name="Dephoure N."/>
            <person name="O'Shea E.K."/>
            <person name="Weissman J.S."/>
        </authorList>
    </citation>
    <scope>LEVEL OF PROTEIN EXPRESSION [LARGE SCALE ANALYSIS]</scope>
</reference>
<accession>Q12326</accession>
<accession>D6W211</accession>
<dbReference type="EC" id="5.4.2.11"/>
<dbReference type="EMBL" id="X91067">
    <property type="protein sequence ID" value="CAA62530.1"/>
    <property type="molecule type" value="Genomic_DNA"/>
</dbReference>
<dbReference type="EMBL" id="Z74798">
    <property type="protein sequence ID" value="CAA99064.1"/>
    <property type="molecule type" value="Genomic_DNA"/>
</dbReference>
<dbReference type="EMBL" id="BK006948">
    <property type="protein sequence ID" value="DAA10727.1"/>
    <property type="molecule type" value="Genomic_DNA"/>
</dbReference>
<dbReference type="PIR" id="S61723">
    <property type="entry name" value="S61723"/>
</dbReference>
<dbReference type="RefSeq" id="NP_014585.1">
    <property type="nucleotide sequence ID" value="NM_001183311.1"/>
</dbReference>
<dbReference type="SMR" id="Q12326"/>
<dbReference type="BioGRID" id="34345">
    <property type="interactions" value="95"/>
</dbReference>
<dbReference type="DIP" id="DIP-4234N"/>
<dbReference type="FunCoup" id="Q12326">
    <property type="interactions" value="286"/>
</dbReference>
<dbReference type="IntAct" id="Q12326">
    <property type="interactions" value="5"/>
</dbReference>
<dbReference type="STRING" id="4932.YOL056W"/>
<dbReference type="iPTMnet" id="Q12326"/>
<dbReference type="PaxDb" id="4932-YOL056W"/>
<dbReference type="PeptideAtlas" id="Q12326"/>
<dbReference type="EnsemblFungi" id="YOL056W_mRNA">
    <property type="protein sequence ID" value="YOL056W"/>
    <property type="gene ID" value="YOL056W"/>
</dbReference>
<dbReference type="GeneID" id="854098"/>
<dbReference type="KEGG" id="sce:YOL056W"/>
<dbReference type="AGR" id="SGD:S000005417"/>
<dbReference type="SGD" id="S000005417">
    <property type="gene designation" value="GPM3"/>
</dbReference>
<dbReference type="VEuPathDB" id="FungiDB:YOL056W"/>
<dbReference type="eggNOG" id="KOG0235">
    <property type="taxonomic scope" value="Eukaryota"/>
</dbReference>
<dbReference type="GeneTree" id="ENSGT00950000182926"/>
<dbReference type="HOGENOM" id="CLU_033323_1_6_1"/>
<dbReference type="InParanoid" id="Q12326"/>
<dbReference type="OMA" id="IRTQQTM"/>
<dbReference type="OrthoDB" id="354304at2759"/>
<dbReference type="BioCyc" id="YEAST:G3O-33467-MONOMER"/>
<dbReference type="UniPathway" id="UPA00109">
    <property type="reaction ID" value="UER00186"/>
</dbReference>
<dbReference type="BioGRID-ORCS" id="854098">
    <property type="hits" value="0 hits in 10 CRISPR screens"/>
</dbReference>
<dbReference type="PRO" id="PR:Q12326"/>
<dbReference type="Proteomes" id="UP000002311">
    <property type="component" value="Chromosome XV"/>
</dbReference>
<dbReference type="RNAct" id="Q12326">
    <property type="molecule type" value="protein"/>
</dbReference>
<dbReference type="GO" id="GO:0005737">
    <property type="term" value="C:cytoplasm"/>
    <property type="evidence" value="ECO:0007005"/>
    <property type="project" value="SGD"/>
</dbReference>
<dbReference type="GO" id="GO:0004619">
    <property type="term" value="F:phosphoglycerate mutase activity"/>
    <property type="evidence" value="ECO:0007669"/>
    <property type="project" value="UniProtKB-EC"/>
</dbReference>
<dbReference type="GO" id="GO:0006096">
    <property type="term" value="P:glycolytic process"/>
    <property type="evidence" value="ECO:0007669"/>
    <property type="project" value="UniProtKB-UniPathway"/>
</dbReference>
<dbReference type="CDD" id="cd07067">
    <property type="entry name" value="HP_PGM_like"/>
    <property type="match status" value="1"/>
</dbReference>
<dbReference type="FunFam" id="3.40.50.1240:FF:000040">
    <property type="entry name" value="Phosphoglycerate mutase"/>
    <property type="match status" value="1"/>
</dbReference>
<dbReference type="Gene3D" id="3.40.50.1240">
    <property type="entry name" value="Phosphoglycerate mutase-like"/>
    <property type="match status" value="1"/>
</dbReference>
<dbReference type="HAMAP" id="MF_01039">
    <property type="entry name" value="PGAM_GpmA"/>
    <property type="match status" value="1"/>
</dbReference>
<dbReference type="InterPro" id="IPR013078">
    <property type="entry name" value="His_Pase_superF_clade-1"/>
</dbReference>
<dbReference type="InterPro" id="IPR029033">
    <property type="entry name" value="His_PPase_superfam"/>
</dbReference>
<dbReference type="InterPro" id="IPR001345">
    <property type="entry name" value="PG/BPGM_mutase_AS"/>
</dbReference>
<dbReference type="InterPro" id="IPR005952">
    <property type="entry name" value="Phosphogly_mut1"/>
</dbReference>
<dbReference type="NCBIfam" id="TIGR01258">
    <property type="entry name" value="pgm_1"/>
    <property type="match status" value="1"/>
</dbReference>
<dbReference type="PANTHER" id="PTHR11931">
    <property type="entry name" value="PHOSPHOGLYCERATE MUTASE"/>
    <property type="match status" value="1"/>
</dbReference>
<dbReference type="Pfam" id="PF00300">
    <property type="entry name" value="His_Phos_1"/>
    <property type="match status" value="2"/>
</dbReference>
<dbReference type="PIRSF" id="PIRSF000709">
    <property type="entry name" value="6PFK_2-Ptase"/>
    <property type="match status" value="1"/>
</dbReference>
<dbReference type="SMART" id="SM00855">
    <property type="entry name" value="PGAM"/>
    <property type="match status" value="1"/>
</dbReference>
<dbReference type="SUPFAM" id="SSF53254">
    <property type="entry name" value="Phosphoglycerate mutase-like"/>
    <property type="match status" value="1"/>
</dbReference>
<dbReference type="PROSITE" id="PS00175">
    <property type="entry name" value="PG_MUTASE"/>
    <property type="match status" value="1"/>
</dbReference>
<organism>
    <name type="scientific">Saccharomyces cerevisiae (strain ATCC 204508 / S288c)</name>
    <name type="common">Baker's yeast</name>
    <dbReference type="NCBI Taxonomy" id="559292"/>
    <lineage>
        <taxon>Eukaryota</taxon>
        <taxon>Fungi</taxon>
        <taxon>Dikarya</taxon>
        <taxon>Ascomycota</taxon>
        <taxon>Saccharomycotina</taxon>
        <taxon>Saccharomycetes</taxon>
        <taxon>Saccharomycetales</taxon>
        <taxon>Saccharomycetaceae</taxon>
        <taxon>Saccharomyces</taxon>
    </lineage>
</organism>